<sequence length="522" mass="58491">MQDFWHAASAQLESELTPQQFKTWIKPLTPLSFDEQACMLRIAAPNRFKLDWVKSQFSGRIQSLACDYWEMQVDVQFVLDPTAGQRQAAMQPALAPMPMQPLAAQTMQAQAVPREAPARPTMAPYRETPMATAAHAAADIDVPVMDAAEASTQSYRVPAPAAPAVMGGLSAPPAAPVDDTVHERSRLNPILTFDNLVTGKANQLARAAAVQVANNPGKSYNPLYLYGGVGLGKTHLIHAIGNFMLMENPRARIRYIHAEQYVSDVVKAYQRKAFDDFKRYYHSLDLLLIDDIQFFSGKNRTQEEFFYAFEALIANRAQVIITSDTYPKEITGIDDRLISRFDSGLTVAIEPPELEMRVAILMKKAQAENVTVPEEVAFFVAKHLRSNVRELEGALRKILAYSNFHGKEITIEVTREALKDLLTVQNRQISVENIQKTCADFYNIKVADMYSKKRPANIARPRQIAMYLAKELTQKSLPEIGELFGGRDHTTVLHAVRKIADERSKDAQLNHELHVLEQTLKG</sequence>
<protein>
    <recommendedName>
        <fullName evidence="1">Chromosomal replication initiator protein DnaA</fullName>
    </recommendedName>
</protein>
<gene>
    <name evidence="1" type="primary">dnaA</name>
    <name type="ordered locus">RSc3442</name>
    <name type="ORF">RS01823</name>
</gene>
<proteinExistence type="inferred from homology"/>
<keyword id="KW-0067">ATP-binding</keyword>
<keyword id="KW-0963">Cytoplasm</keyword>
<keyword id="KW-0235">DNA replication</keyword>
<keyword id="KW-0238">DNA-binding</keyword>
<keyword id="KW-0446">Lipid-binding</keyword>
<keyword id="KW-0547">Nucleotide-binding</keyword>
<keyword id="KW-1185">Reference proteome</keyword>
<feature type="chain" id="PRO_0000114242" description="Chromosomal replication initiator protein DnaA">
    <location>
        <begin position="1"/>
        <end position="522"/>
    </location>
</feature>
<feature type="region of interest" description="Domain I, interacts with DnaA modulators" evidence="1">
    <location>
        <begin position="1"/>
        <end position="71"/>
    </location>
</feature>
<feature type="region of interest" description="Domain II" evidence="1">
    <location>
        <begin position="71"/>
        <end position="185"/>
    </location>
</feature>
<feature type="region of interest" description="Domain III, AAA+ region" evidence="1">
    <location>
        <begin position="186"/>
        <end position="402"/>
    </location>
</feature>
<feature type="region of interest" description="Domain IV, binds dsDNA" evidence="1">
    <location>
        <begin position="403"/>
        <end position="522"/>
    </location>
</feature>
<feature type="binding site" evidence="1">
    <location>
        <position position="230"/>
    </location>
    <ligand>
        <name>ATP</name>
        <dbReference type="ChEBI" id="CHEBI:30616"/>
    </ligand>
</feature>
<feature type="binding site" evidence="1">
    <location>
        <position position="232"/>
    </location>
    <ligand>
        <name>ATP</name>
        <dbReference type="ChEBI" id="CHEBI:30616"/>
    </ligand>
</feature>
<feature type="binding site" evidence="1">
    <location>
        <position position="233"/>
    </location>
    <ligand>
        <name>ATP</name>
        <dbReference type="ChEBI" id="CHEBI:30616"/>
    </ligand>
</feature>
<feature type="binding site" evidence="1">
    <location>
        <position position="234"/>
    </location>
    <ligand>
        <name>ATP</name>
        <dbReference type="ChEBI" id="CHEBI:30616"/>
    </ligand>
</feature>
<dbReference type="EMBL" id="AL646052">
    <property type="protein sequence ID" value="CAD16939.1"/>
    <property type="molecule type" value="Genomic_DNA"/>
</dbReference>
<dbReference type="RefSeq" id="WP_011003321.1">
    <property type="nucleotide sequence ID" value="NC_003295.1"/>
</dbReference>
<dbReference type="SMR" id="Q8XTV4"/>
<dbReference type="STRING" id="267608.RSc3442"/>
<dbReference type="EnsemblBacteria" id="CAD16939">
    <property type="protein sequence ID" value="CAD16939"/>
    <property type="gene ID" value="RSc3442"/>
</dbReference>
<dbReference type="KEGG" id="rso:RSc3442"/>
<dbReference type="PATRIC" id="fig|267608.8.peg.3483"/>
<dbReference type="eggNOG" id="COG0593">
    <property type="taxonomic scope" value="Bacteria"/>
</dbReference>
<dbReference type="HOGENOM" id="CLU_026910_0_1_4"/>
<dbReference type="Proteomes" id="UP000001436">
    <property type="component" value="Chromosome"/>
</dbReference>
<dbReference type="GO" id="GO:0005737">
    <property type="term" value="C:cytoplasm"/>
    <property type="evidence" value="ECO:0007669"/>
    <property type="project" value="UniProtKB-SubCell"/>
</dbReference>
<dbReference type="GO" id="GO:0005886">
    <property type="term" value="C:plasma membrane"/>
    <property type="evidence" value="ECO:0007669"/>
    <property type="project" value="TreeGrafter"/>
</dbReference>
<dbReference type="GO" id="GO:0005524">
    <property type="term" value="F:ATP binding"/>
    <property type="evidence" value="ECO:0007669"/>
    <property type="project" value="UniProtKB-UniRule"/>
</dbReference>
<dbReference type="GO" id="GO:0016887">
    <property type="term" value="F:ATP hydrolysis activity"/>
    <property type="evidence" value="ECO:0007669"/>
    <property type="project" value="InterPro"/>
</dbReference>
<dbReference type="GO" id="GO:0003688">
    <property type="term" value="F:DNA replication origin binding"/>
    <property type="evidence" value="ECO:0007669"/>
    <property type="project" value="UniProtKB-UniRule"/>
</dbReference>
<dbReference type="GO" id="GO:0008289">
    <property type="term" value="F:lipid binding"/>
    <property type="evidence" value="ECO:0007669"/>
    <property type="project" value="UniProtKB-KW"/>
</dbReference>
<dbReference type="GO" id="GO:0006270">
    <property type="term" value="P:DNA replication initiation"/>
    <property type="evidence" value="ECO:0007669"/>
    <property type="project" value="UniProtKB-UniRule"/>
</dbReference>
<dbReference type="GO" id="GO:0006275">
    <property type="term" value="P:regulation of DNA replication"/>
    <property type="evidence" value="ECO:0007669"/>
    <property type="project" value="UniProtKB-UniRule"/>
</dbReference>
<dbReference type="CDD" id="cd00009">
    <property type="entry name" value="AAA"/>
    <property type="match status" value="1"/>
</dbReference>
<dbReference type="CDD" id="cd06571">
    <property type="entry name" value="Bac_DnaA_C"/>
    <property type="match status" value="1"/>
</dbReference>
<dbReference type="FunFam" id="1.10.8.60:FF:000003">
    <property type="entry name" value="Chromosomal replication initiator protein DnaA"/>
    <property type="match status" value="1"/>
</dbReference>
<dbReference type="FunFam" id="3.40.50.300:FF:000668">
    <property type="entry name" value="Chromosomal replication initiator protein DnaA"/>
    <property type="match status" value="1"/>
</dbReference>
<dbReference type="Gene3D" id="1.10.1750.10">
    <property type="match status" value="1"/>
</dbReference>
<dbReference type="Gene3D" id="1.10.8.60">
    <property type="match status" value="1"/>
</dbReference>
<dbReference type="Gene3D" id="3.30.300.180">
    <property type="match status" value="1"/>
</dbReference>
<dbReference type="Gene3D" id="3.40.50.300">
    <property type="entry name" value="P-loop containing nucleotide triphosphate hydrolases"/>
    <property type="match status" value="1"/>
</dbReference>
<dbReference type="HAMAP" id="MF_00377">
    <property type="entry name" value="DnaA_bact"/>
    <property type="match status" value="1"/>
</dbReference>
<dbReference type="InterPro" id="IPR003593">
    <property type="entry name" value="AAA+_ATPase"/>
</dbReference>
<dbReference type="InterPro" id="IPR001957">
    <property type="entry name" value="Chromosome_initiator_DnaA"/>
</dbReference>
<dbReference type="InterPro" id="IPR020591">
    <property type="entry name" value="Chromosome_initiator_DnaA-like"/>
</dbReference>
<dbReference type="InterPro" id="IPR018312">
    <property type="entry name" value="Chromosome_initiator_DnaA_CS"/>
</dbReference>
<dbReference type="InterPro" id="IPR013159">
    <property type="entry name" value="DnaA_C"/>
</dbReference>
<dbReference type="InterPro" id="IPR013317">
    <property type="entry name" value="DnaA_dom"/>
</dbReference>
<dbReference type="InterPro" id="IPR024633">
    <property type="entry name" value="DnaA_N_dom"/>
</dbReference>
<dbReference type="InterPro" id="IPR038454">
    <property type="entry name" value="DnaA_N_sf"/>
</dbReference>
<dbReference type="InterPro" id="IPR027417">
    <property type="entry name" value="P-loop_NTPase"/>
</dbReference>
<dbReference type="InterPro" id="IPR010921">
    <property type="entry name" value="Trp_repressor/repl_initiator"/>
</dbReference>
<dbReference type="NCBIfam" id="TIGR00362">
    <property type="entry name" value="DnaA"/>
    <property type="match status" value="1"/>
</dbReference>
<dbReference type="PANTHER" id="PTHR30050">
    <property type="entry name" value="CHROMOSOMAL REPLICATION INITIATOR PROTEIN DNAA"/>
    <property type="match status" value="1"/>
</dbReference>
<dbReference type="PANTHER" id="PTHR30050:SF2">
    <property type="entry name" value="CHROMOSOMAL REPLICATION INITIATOR PROTEIN DNAA"/>
    <property type="match status" value="1"/>
</dbReference>
<dbReference type="Pfam" id="PF00308">
    <property type="entry name" value="Bac_DnaA"/>
    <property type="match status" value="1"/>
</dbReference>
<dbReference type="Pfam" id="PF08299">
    <property type="entry name" value="Bac_DnaA_C"/>
    <property type="match status" value="1"/>
</dbReference>
<dbReference type="Pfam" id="PF11638">
    <property type="entry name" value="DnaA_N"/>
    <property type="match status" value="1"/>
</dbReference>
<dbReference type="PRINTS" id="PR00051">
    <property type="entry name" value="DNAA"/>
</dbReference>
<dbReference type="SMART" id="SM00382">
    <property type="entry name" value="AAA"/>
    <property type="match status" value="1"/>
</dbReference>
<dbReference type="SMART" id="SM00760">
    <property type="entry name" value="Bac_DnaA_C"/>
    <property type="match status" value="1"/>
</dbReference>
<dbReference type="SUPFAM" id="SSF52540">
    <property type="entry name" value="P-loop containing nucleoside triphosphate hydrolases"/>
    <property type="match status" value="1"/>
</dbReference>
<dbReference type="SUPFAM" id="SSF48295">
    <property type="entry name" value="TrpR-like"/>
    <property type="match status" value="1"/>
</dbReference>
<dbReference type="PROSITE" id="PS01008">
    <property type="entry name" value="DNAA"/>
    <property type="match status" value="1"/>
</dbReference>
<name>DNAA_RALN1</name>
<accession>Q8XTV4</accession>
<reference key="1">
    <citation type="journal article" date="2002" name="Nature">
        <title>Genome sequence of the plant pathogen Ralstonia solanacearum.</title>
        <authorList>
            <person name="Salanoubat M."/>
            <person name="Genin S."/>
            <person name="Artiguenave F."/>
            <person name="Gouzy J."/>
            <person name="Mangenot S."/>
            <person name="Arlat M."/>
            <person name="Billault A."/>
            <person name="Brottier P."/>
            <person name="Camus J.-C."/>
            <person name="Cattolico L."/>
            <person name="Chandler M."/>
            <person name="Choisne N."/>
            <person name="Claudel-Renard C."/>
            <person name="Cunnac S."/>
            <person name="Demange N."/>
            <person name="Gaspin C."/>
            <person name="Lavie M."/>
            <person name="Moisan A."/>
            <person name="Robert C."/>
            <person name="Saurin W."/>
            <person name="Schiex T."/>
            <person name="Siguier P."/>
            <person name="Thebault P."/>
            <person name="Whalen M."/>
            <person name="Wincker P."/>
            <person name="Levy M."/>
            <person name="Weissenbach J."/>
            <person name="Boucher C.A."/>
        </authorList>
    </citation>
    <scope>NUCLEOTIDE SEQUENCE [LARGE SCALE GENOMIC DNA]</scope>
    <source>
        <strain>ATCC BAA-1114 / GMI1000</strain>
    </source>
</reference>
<organism>
    <name type="scientific">Ralstonia nicotianae (strain ATCC BAA-1114 / GMI1000)</name>
    <name type="common">Ralstonia solanacearum</name>
    <dbReference type="NCBI Taxonomy" id="267608"/>
    <lineage>
        <taxon>Bacteria</taxon>
        <taxon>Pseudomonadati</taxon>
        <taxon>Pseudomonadota</taxon>
        <taxon>Betaproteobacteria</taxon>
        <taxon>Burkholderiales</taxon>
        <taxon>Burkholderiaceae</taxon>
        <taxon>Ralstonia</taxon>
        <taxon>Ralstonia solanacearum species complex</taxon>
    </lineage>
</organism>
<comment type="function">
    <text evidence="1">Plays an essential role in the initiation and regulation of chromosomal replication. ATP-DnaA binds to the origin of replication (oriC) to initiate formation of the DNA replication initiation complex once per cell cycle. Binds the DnaA box (a 9 base pair repeat at the origin) and separates the double-stranded (ds)DNA. Forms a right-handed helical filament on oriC DNA; dsDNA binds to the exterior of the filament while single-stranded (ss)DNA is stabiized in the filament's interior. The ATP-DnaA-oriC complex binds and stabilizes one strand of the AT-rich DNA unwinding element (DUE), permitting loading of DNA polymerase. After initiation quickly degrades to an ADP-DnaA complex that is not apt for DNA replication. Binds acidic phospholipids.</text>
</comment>
<comment type="subunit">
    <text evidence="1">Oligomerizes as a right-handed, spiral filament on DNA at oriC.</text>
</comment>
<comment type="subcellular location">
    <subcellularLocation>
        <location evidence="1">Cytoplasm</location>
    </subcellularLocation>
</comment>
<comment type="domain">
    <text evidence="1">Domain I is involved in oligomerization and binding regulators, domain II is flexibile and of varying length in different bacteria, domain III forms the AAA+ region, while domain IV binds dsDNA.</text>
</comment>
<comment type="similarity">
    <text evidence="1">Belongs to the DnaA family.</text>
</comment>
<evidence type="ECO:0000255" key="1">
    <source>
        <dbReference type="HAMAP-Rule" id="MF_00377"/>
    </source>
</evidence>